<organism>
    <name type="scientific">Chlamydia trachomatis serovar D (strain ATCC VR-885 / DSM 19411 / UW-3/Cx)</name>
    <dbReference type="NCBI Taxonomy" id="272561"/>
    <lineage>
        <taxon>Bacteria</taxon>
        <taxon>Pseudomonadati</taxon>
        <taxon>Chlamydiota</taxon>
        <taxon>Chlamydiia</taxon>
        <taxon>Chlamydiales</taxon>
        <taxon>Chlamydiaceae</taxon>
        <taxon>Chlamydia/Chlamydophila group</taxon>
        <taxon>Chlamydia</taxon>
    </lineage>
</organism>
<sequence>MRKTVIVAMSGGVDSSVVAYLLKKQGEYNVVGLFMKNWGEQDENGECTATKDFRDVERIAEQLSIPYYTVSFSKEYKERVFSRFLREYANGYTPNPDVLCNREIKFDLLQKKVRELKGDFLATGHYCRGGADGTGLSRGIDPNKDQSYFLCGTPKDALSNVLFPLGGMYKTEVRRIAQEAGLATATKKDSTGICFIGKRPFKSFLEQFVADSPGDIIDFDTQQVVGRHEGAHYYTIGQRRGLNIGGMEKPCYVLSKNMEKNIVYIVRGEDHPLLYRQELLAKELNWFVPLQEPMICSAKVRYRSPDEKCSVYPLEDGTVKVIFDVPVKAVTPGQTVAFYQGDICLGGGVIEVPMIHQL</sequence>
<reference key="1">
    <citation type="journal article" date="1998" name="Science">
        <title>Genome sequence of an obligate intracellular pathogen of humans: Chlamydia trachomatis.</title>
        <authorList>
            <person name="Stephens R.S."/>
            <person name="Kalman S."/>
            <person name="Lammel C.J."/>
            <person name="Fan J."/>
            <person name="Marathe R."/>
            <person name="Aravind L."/>
            <person name="Mitchell W.P."/>
            <person name="Olinger L."/>
            <person name="Tatusov R.L."/>
            <person name="Zhao Q."/>
            <person name="Koonin E.V."/>
            <person name="Davis R.W."/>
        </authorList>
    </citation>
    <scope>NUCLEOTIDE SEQUENCE [LARGE SCALE GENOMIC DNA]</scope>
    <source>
        <strain>ATCC VR-885 / DSM 19411 / UW-3/Cx</strain>
    </source>
</reference>
<feature type="chain" id="PRO_0000121625" description="tRNA-specific 2-thiouridylase MnmA">
    <location>
        <begin position="1"/>
        <end position="358"/>
    </location>
</feature>
<feature type="region of interest" description="Interaction with target base in tRNA" evidence="1">
    <location>
        <begin position="95"/>
        <end position="97"/>
    </location>
</feature>
<feature type="region of interest" description="Interaction with tRNA" evidence="1">
    <location>
        <begin position="144"/>
        <end position="146"/>
    </location>
</feature>
<feature type="region of interest" description="Interaction with tRNA" evidence="1">
    <location>
        <begin position="301"/>
        <end position="302"/>
    </location>
</feature>
<feature type="active site" description="Nucleophile" evidence="1">
    <location>
        <position position="100"/>
    </location>
</feature>
<feature type="active site" description="Cysteine persulfide intermediate" evidence="1">
    <location>
        <position position="194"/>
    </location>
</feature>
<feature type="binding site" evidence="1">
    <location>
        <begin position="8"/>
        <end position="15"/>
    </location>
    <ligand>
        <name>ATP</name>
        <dbReference type="ChEBI" id="CHEBI:30616"/>
    </ligand>
</feature>
<feature type="binding site" evidence="1">
    <location>
        <position position="35"/>
    </location>
    <ligand>
        <name>ATP</name>
        <dbReference type="ChEBI" id="CHEBI:30616"/>
    </ligand>
</feature>
<feature type="binding site" evidence="1">
    <location>
        <position position="124"/>
    </location>
    <ligand>
        <name>ATP</name>
        <dbReference type="ChEBI" id="CHEBI:30616"/>
    </ligand>
</feature>
<feature type="site" description="Interaction with tRNA" evidence="1">
    <location>
        <position position="125"/>
    </location>
</feature>
<feature type="site" description="Interaction with tRNA" evidence="1">
    <location>
        <position position="334"/>
    </location>
</feature>
<feature type="disulfide bond" description="Alternate" evidence="1">
    <location>
        <begin position="100"/>
        <end position="194"/>
    </location>
</feature>
<gene>
    <name evidence="1" type="primary">mnmA</name>
    <name type="synonym">trmU</name>
    <name type="ordered locus">CT_287</name>
</gene>
<proteinExistence type="inferred from homology"/>
<evidence type="ECO:0000255" key="1">
    <source>
        <dbReference type="HAMAP-Rule" id="MF_00144"/>
    </source>
</evidence>
<comment type="function">
    <text evidence="1">Catalyzes the 2-thiolation of uridine at the wobble position (U34) of tRNA, leading to the formation of s(2)U34.</text>
</comment>
<comment type="catalytic activity">
    <reaction evidence="1">
        <text>S-sulfanyl-L-cysteinyl-[protein] + uridine(34) in tRNA + AH2 + ATP = 2-thiouridine(34) in tRNA + L-cysteinyl-[protein] + A + AMP + diphosphate + H(+)</text>
        <dbReference type="Rhea" id="RHEA:47032"/>
        <dbReference type="Rhea" id="RHEA-COMP:10131"/>
        <dbReference type="Rhea" id="RHEA-COMP:11726"/>
        <dbReference type="Rhea" id="RHEA-COMP:11727"/>
        <dbReference type="Rhea" id="RHEA-COMP:11728"/>
        <dbReference type="ChEBI" id="CHEBI:13193"/>
        <dbReference type="ChEBI" id="CHEBI:15378"/>
        <dbReference type="ChEBI" id="CHEBI:17499"/>
        <dbReference type="ChEBI" id="CHEBI:29950"/>
        <dbReference type="ChEBI" id="CHEBI:30616"/>
        <dbReference type="ChEBI" id="CHEBI:33019"/>
        <dbReference type="ChEBI" id="CHEBI:61963"/>
        <dbReference type="ChEBI" id="CHEBI:65315"/>
        <dbReference type="ChEBI" id="CHEBI:87170"/>
        <dbReference type="ChEBI" id="CHEBI:456215"/>
        <dbReference type="EC" id="2.8.1.13"/>
    </reaction>
</comment>
<comment type="subcellular location">
    <subcellularLocation>
        <location evidence="1">Cytoplasm</location>
    </subcellularLocation>
</comment>
<comment type="similarity">
    <text evidence="1">Belongs to the MnmA/TRMU family.</text>
</comment>
<protein>
    <recommendedName>
        <fullName evidence="1">tRNA-specific 2-thiouridylase MnmA</fullName>
        <ecNumber evidence="1">2.8.1.13</ecNumber>
    </recommendedName>
</protein>
<keyword id="KW-0067">ATP-binding</keyword>
<keyword id="KW-0963">Cytoplasm</keyword>
<keyword id="KW-1015">Disulfide bond</keyword>
<keyword id="KW-0547">Nucleotide-binding</keyword>
<keyword id="KW-1185">Reference proteome</keyword>
<keyword id="KW-0694">RNA-binding</keyword>
<keyword id="KW-0808">Transferase</keyword>
<keyword id="KW-0819">tRNA processing</keyword>
<keyword id="KW-0820">tRNA-binding</keyword>
<name>MNMA_CHLTR</name>
<accession>O84289</accession>
<dbReference type="EC" id="2.8.1.13" evidence="1"/>
<dbReference type="EMBL" id="AE001273">
    <property type="protein sequence ID" value="AAC67880.1"/>
    <property type="molecule type" value="Genomic_DNA"/>
</dbReference>
<dbReference type="PIR" id="D71533">
    <property type="entry name" value="D71533"/>
</dbReference>
<dbReference type="RefSeq" id="NP_219792.1">
    <property type="nucleotide sequence ID" value="NC_000117.1"/>
</dbReference>
<dbReference type="RefSeq" id="WP_009872281.1">
    <property type="nucleotide sequence ID" value="NC_000117.1"/>
</dbReference>
<dbReference type="SMR" id="O84289"/>
<dbReference type="FunCoup" id="O84289">
    <property type="interactions" value="266"/>
</dbReference>
<dbReference type="STRING" id="272561.CT_287"/>
<dbReference type="EnsemblBacteria" id="AAC67880">
    <property type="protein sequence ID" value="AAC67880"/>
    <property type="gene ID" value="CT_287"/>
</dbReference>
<dbReference type="GeneID" id="884836"/>
<dbReference type="KEGG" id="ctr:CT_287"/>
<dbReference type="PATRIC" id="fig|272561.5.peg.307"/>
<dbReference type="HOGENOM" id="CLU_035188_1_0_0"/>
<dbReference type="InParanoid" id="O84289"/>
<dbReference type="OrthoDB" id="9800696at2"/>
<dbReference type="Proteomes" id="UP000000431">
    <property type="component" value="Chromosome"/>
</dbReference>
<dbReference type="GO" id="GO:0005737">
    <property type="term" value="C:cytoplasm"/>
    <property type="evidence" value="ECO:0007669"/>
    <property type="project" value="UniProtKB-SubCell"/>
</dbReference>
<dbReference type="GO" id="GO:0005524">
    <property type="term" value="F:ATP binding"/>
    <property type="evidence" value="ECO:0007669"/>
    <property type="project" value="UniProtKB-KW"/>
</dbReference>
<dbReference type="GO" id="GO:0000049">
    <property type="term" value="F:tRNA binding"/>
    <property type="evidence" value="ECO:0007669"/>
    <property type="project" value="UniProtKB-KW"/>
</dbReference>
<dbReference type="GO" id="GO:0103016">
    <property type="term" value="F:tRNA-uridine 2-sulfurtransferase activity"/>
    <property type="evidence" value="ECO:0007669"/>
    <property type="project" value="UniProtKB-EC"/>
</dbReference>
<dbReference type="GO" id="GO:0002143">
    <property type="term" value="P:tRNA wobble position uridine thiolation"/>
    <property type="evidence" value="ECO:0000318"/>
    <property type="project" value="GO_Central"/>
</dbReference>
<dbReference type="CDD" id="cd01998">
    <property type="entry name" value="MnmA_TRMU-like"/>
    <property type="match status" value="1"/>
</dbReference>
<dbReference type="FunFam" id="2.30.30.280:FF:000001">
    <property type="entry name" value="tRNA-specific 2-thiouridylase MnmA"/>
    <property type="match status" value="1"/>
</dbReference>
<dbReference type="FunFam" id="2.40.30.10:FF:000023">
    <property type="entry name" value="tRNA-specific 2-thiouridylase MnmA"/>
    <property type="match status" value="1"/>
</dbReference>
<dbReference type="FunFam" id="3.40.50.620:FF:000115">
    <property type="entry name" value="tRNA-specific 2-thiouridylase MnmA"/>
    <property type="match status" value="1"/>
</dbReference>
<dbReference type="Gene3D" id="2.30.30.280">
    <property type="entry name" value="Adenine nucleotide alpha hydrolases-like domains"/>
    <property type="match status" value="1"/>
</dbReference>
<dbReference type="Gene3D" id="3.40.50.620">
    <property type="entry name" value="HUPs"/>
    <property type="match status" value="1"/>
</dbReference>
<dbReference type="Gene3D" id="2.40.30.10">
    <property type="entry name" value="Translation factors"/>
    <property type="match status" value="1"/>
</dbReference>
<dbReference type="HAMAP" id="MF_00144">
    <property type="entry name" value="tRNA_thiouridyl_MnmA"/>
    <property type="match status" value="1"/>
</dbReference>
<dbReference type="InterPro" id="IPR004506">
    <property type="entry name" value="MnmA-like"/>
</dbReference>
<dbReference type="InterPro" id="IPR046885">
    <property type="entry name" value="MnmA-like_C"/>
</dbReference>
<dbReference type="InterPro" id="IPR046884">
    <property type="entry name" value="MnmA-like_central"/>
</dbReference>
<dbReference type="InterPro" id="IPR023382">
    <property type="entry name" value="MnmA-like_central_sf"/>
</dbReference>
<dbReference type="InterPro" id="IPR014729">
    <property type="entry name" value="Rossmann-like_a/b/a_fold"/>
</dbReference>
<dbReference type="NCBIfam" id="NF001138">
    <property type="entry name" value="PRK00143.1"/>
    <property type="match status" value="1"/>
</dbReference>
<dbReference type="NCBIfam" id="TIGR00420">
    <property type="entry name" value="trmU"/>
    <property type="match status" value="1"/>
</dbReference>
<dbReference type="PANTHER" id="PTHR11933:SF5">
    <property type="entry name" value="MITOCHONDRIAL TRNA-SPECIFIC 2-THIOURIDYLASE 1"/>
    <property type="match status" value="1"/>
</dbReference>
<dbReference type="PANTHER" id="PTHR11933">
    <property type="entry name" value="TRNA 5-METHYLAMINOMETHYL-2-THIOURIDYLATE -METHYLTRANSFERASE"/>
    <property type="match status" value="1"/>
</dbReference>
<dbReference type="Pfam" id="PF03054">
    <property type="entry name" value="tRNA_Me_trans"/>
    <property type="match status" value="1"/>
</dbReference>
<dbReference type="Pfam" id="PF20258">
    <property type="entry name" value="tRNA_Me_trans_C"/>
    <property type="match status" value="1"/>
</dbReference>
<dbReference type="Pfam" id="PF20259">
    <property type="entry name" value="tRNA_Me_trans_M"/>
    <property type="match status" value="1"/>
</dbReference>
<dbReference type="SUPFAM" id="SSF52402">
    <property type="entry name" value="Adenine nucleotide alpha hydrolases-like"/>
    <property type="match status" value="1"/>
</dbReference>